<dbReference type="EC" id="7.1.2.2" evidence="1"/>
<dbReference type="EMBL" id="CR378675">
    <property type="protein sequence ID" value="CAG22009.1"/>
    <property type="molecule type" value="Genomic_DNA"/>
</dbReference>
<dbReference type="RefSeq" id="WP_011220233.1">
    <property type="nucleotide sequence ID" value="NC_006371.1"/>
</dbReference>
<dbReference type="SMR" id="Q6LKZ6"/>
<dbReference type="STRING" id="298386.PBPRB0136"/>
<dbReference type="KEGG" id="ppr:PBPRB0136"/>
<dbReference type="eggNOG" id="COG0055">
    <property type="taxonomic scope" value="Bacteria"/>
</dbReference>
<dbReference type="HOGENOM" id="CLU_022398_0_2_6"/>
<dbReference type="Proteomes" id="UP000000593">
    <property type="component" value="Chromosome 2"/>
</dbReference>
<dbReference type="GO" id="GO:0005886">
    <property type="term" value="C:plasma membrane"/>
    <property type="evidence" value="ECO:0007669"/>
    <property type="project" value="UniProtKB-SubCell"/>
</dbReference>
<dbReference type="GO" id="GO:0045259">
    <property type="term" value="C:proton-transporting ATP synthase complex"/>
    <property type="evidence" value="ECO:0007669"/>
    <property type="project" value="UniProtKB-KW"/>
</dbReference>
<dbReference type="GO" id="GO:0005524">
    <property type="term" value="F:ATP binding"/>
    <property type="evidence" value="ECO:0007669"/>
    <property type="project" value="UniProtKB-UniRule"/>
</dbReference>
<dbReference type="GO" id="GO:0016887">
    <property type="term" value="F:ATP hydrolysis activity"/>
    <property type="evidence" value="ECO:0007669"/>
    <property type="project" value="InterPro"/>
</dbReference>
<dbReference type="GO" id="GO:0046933">
    <property type="term" value="F:proton-transporting ATP synthase activity, rotational mechanism"/>
    <property type="evidence" value="ECO:0007669"/>
    <property type="project" value="UniProtKB-UniRule"/>
</dbReference>
<dbReference type="CDD" id="cd18110">
    <property type="entry name" value="ATP-synt_F1_beta_C"/>
    <property type="match status" value="1"/>
</dbReference>
<dbReference type="CDD" id="cd18115">
    <property type="entry name" value="ATP-synt_F1_beta_N"/>
    <property type="match status" value="1"/>
</dbReference>
<dbReference type="CDD" id="cd01133">
    <property type="entry name" value="F1-ATPase_beta_CD"/>
    <property type="match status" value="1"/>
</dbReference>
<dbReference type="FunFam" id="1.10.1140.10:FF:000001">
    <property type="entry name" value="ATP synthase subunit beta"/>
    <property type="match status" value="1"/>
</dbReference>
<dbReference type="FunFam" id="3.40.50.300:FF:000004">
    <property type="entry name" value="ATP synthase subunit beta"/>
    <property type="match status" value="1"/>
</dbReference>
<dbReference type="Gene3D" id="2.40.10.170">
    <property type="match status" value="1"/>
</dbReference>
<dbReference type="Gene3D" id="1.10.1140.10">
    <property type="entry name" value="Bovine Mitochondrial F1-atpase, Atp Synthase Beta Chain, Chain D, domain 3"/>
    <property type="match status" value="1"/>
</dbReference>
<dbReference type="Gene3D" id="3.40.50.300">
    <property type="entry name" value="P-loop containing nucleotide triphosphate hydrolases"/>
    <property type="match status" value="1"/>
</dbReference>
<dbReference type="HAMAP" id="MF_01347">
    <property type="entry name" value="ATP_synth_beta_bact"/>
    <property type="match status" value="1"/>
</dbReference>
<dbReference type="InterPro" id="IPR003593">
    <property type="entry name" value="AAA+_ATPase"/>
</dbReference>
<dbReference type="InterPro" id="IPR055190">
    <property type="entry name" value="ATP-synt_VA_C"/>
</dbReference>
<dbReference type="InterPro" id="IPR005722">
    <property type="entry name" value="ATP_synth_F1_bsu"/>
</dbReference>
<dbReference type="InterPro" id="IPR020003">
    <property type="entry name" value="ATPase_a/bsu_AS"/>
</dbReference>
<dbReference type="InterPro" id="IPR050053">
    <property type="entry name" value="ATPase_alpha/beta_chains"/>
</dbReference>
<dbReference type="InterPro" id="IPR004100">
    <property type="entry name" value="ATPase_F1/V1/A1_a/bsu_N"/>
</dbReference>
<dbReference type="InterPro" id="IPR036121">
    <property type="entry name" value="ATPase_F1/V1/A1_a/bsu_N_sf"/>
</dbReference>
<dbReference type="InterPro" id="IPR000194">
    <property type="entry name" value="ATPase_F1/V1/A1_a/bsu_nucl-bd"/>
</dbReference>
<dbReference type="InterPro" id="IPR024034">
    <property type="entry name" value="ATPase_F1/V1_b/a_C"/>
</dbReference>
<dbReference type="InterPro" id="IPR027417">
    <property type="entry name" value="P-loop_NTPase"/>
</dbReference>
<dbReference type="NCBIfam" id="TIGR01039">
    <property type="entry name" value="atpD"/>
    <property type="match status" value="1"/>
</dbReference>
<dbReference type="PANTHER" id="PTHR15184">
    <property type="entry name" value="ATP SYNTHASE"/>
    <property type="match status" value="1"/>
</dbReference>
<dbReference type="PANTHER" id="PTHR15184:SF71">
    <property type="entry name" value="ATP SYNTHASE SUBUNIT BETA, MITOCHONDRIAL"/>
    <property type="match status" value="1"/>
</dbReference>
<dbReference type="Pfam" id="PF00006">
    <property type="entry name" value="ATP-synt_ab"/>
    <property type="match status" value="1"/>
</dbReference>
<dbReference type="Pfam" id="PF02874">
    <property type="entry name" value="ATP-synt_ab_N"/>
    <property type="match status" value="1"/>
</dbReference>
<dbReference type="Pfam" id="PF22919">
    <property type="entry name" value="ATP-synt_VA_C"/>
    <property type="match status" value="1"/>
</dbReference>
<dbReference type="SMART" id="SM00382">
    <property type="entry name" value="AAA"/>
    <property type="match status" value="1"/>
</dbReference>
<dbReference type="SUPFAM" id="SSF47917">
    <property type="entry name" value="C-terminal domain of alpha and beta subunits of F1 ATP synthase"/>
    <property type="match status" value="1"/>
</dbReference>
<dbReference type="SUPFAM" id="SSF50615">
    <property type="entry name" value="N-terminal domain of alpha and beta subunits of F1 ATP synthase"/>
    <property type="match status" value="1"/>
</dbReference>
<dbReference type="SUPFAM" id="SSF52540">
    <property type="entry name" value="P-loop containing nucleoside triphosphate hydrolases"/>
    <property type="match status" value="1"/>
</dbReference>
<dbReference type="PROSITE" id="PS00152">
    <property type="entry name" value="ATPASE_ALPHA_BETA"/>
    <property type="match status" value="1"/>
</dbReference>
<organism>
    <name type="scientific">Photobacterium profundum (strain SS9)</name>
    <dbReference type="NCBI Taxonomy" id="298386"/>
    <lineage>
        <taxon>Bacteria</taxon>
        <taxon>Pseudomonadati</taxon>
        <taxon>Pseudomonadota</taxon>
        <taxon>Gammaproteobacteria</taxon>
        <taxon>Vibrionales</taxon>
        <taxon>Vibrionaceae</taxon>
        <taxon>Photobacterium</taxon>
    </lineage>
</organism>
<feature type="chain" id="PRO_0000254329" description="ATP synthase subunit beta 2">
    <location>
        <begin position="1"/>
        <end position="461"/>
    </location>
</feature>
<feature type="binding site" evidence="1">
    <location>
        <begin position="151"/>
        <end position="158"/>
    </location>
    <ligand>
        <name>ATP</name>
        <dbReference type="ChEBI" id="CHEBI:30616"/>
    </ligand>
</feature>
<gene>
    <name evidence="1" type="primary">atpD2</name>
    <name type="ordered locus">PBPRB0136</name>
</gene>
<sequence length="461" mass="49966">MSTGKIVKVIGAVVDVEFDQDSVPRVYDALNIIDGNNSSLVLEVQQQIGSGIVRCIAMGSSDGMRRGLVAVNTGEPITVPVGEETLGRIMNVLGQPIDECGEIGQKTSYPIHREPPSYEDQANSTELLETGVKVIDLICPFAKGGKIGLFGGAGVGKTVNMMELINNIAKAHSGLSVFTGVGERTREGNDFYYEMKEAGVLDKVAMVYGQMNEPPGNRLRVALTGLTIAERFRDEGRDVLLFIDNIYRYTLAGTEVSALLGRMPSAVGYQPTLAEEMGVLQERITSTHKGSITSIQAVYVPADDLTDPSPATTFAHLDATVVLSRNIAALGLYPAIDPLDSTSRQLDPLVVGVEHYDVARGVQTVLQRYKELKDIIAILGMDELSEDDKLTVARARKVERFLTQPYHVAEVFTGQPGIFVSLKDTLNGFKGLLSGEYDDVPEQAFLYCGAIEDVIEKAKTM</sequence>
<comment type="function">
    <text evidence="1">Produces ATP from ADP in the presence of a proton gradient across the membrane. The catalytic sites are hosted primarily by the beta subunits.</text>
</comment>
<comment type="catalytic activity">
    <reaction evidence="1">
        <text>ATP + H2O + 4 H(+)(in) = ADP + phosphate + 5 H(+)(out)</text>
        <dbReference type="Rhea" id="RHEA:57720"/>
        <dbReference type="ChEBI" id="CHEBI:15377"/>
        <dbReference type="ChEBI" id="CHEBI:15378"/>
        <dbReference type="ChEBI" id="CHEBI:30616"/>
        <dbReference type="ChEBI" id="CHEBI:43474"/>
        <dbReference type="ChEBI" id="CHEBI:456216"/>
        <dbReference type="EC" id="7.1.2.2"/>
    </reaction>
</comment>
<comment type="subunit">
    <text evidence="1">F-type ATPases have 2 components, CF(1) - the catalytic core - and CF(0) - the membrane proton channel. CF(1) has five subunits: alpha(3), beta(3), gamma(1), delta(1), epsilon(1). CF(0) has three main subunits: a(1), b(2) and c(9-12). The alpha and beta chains form an alternating ring which encloses part of the gamma chain. CF(1) is attached to CF(0) by a central stalk formed by the gamma and epsilon chains, while a peripheral stalk is formed by the delta and b chains.</text>
</comment>
<comment type="subcellular location">
    <subcellularLocation>
        <location evidence="1">Cell inner membrane</location>
        <topology evidence="1">Peripheral membrane protein</topology>
    </subcellularLocation>
</comment>
<comment type="similarity">
    <text evidence="1">Belongs to the ATPase alpha/beta chains family.</text>
</comment>
<keyword id="KW-0066">ATP synthesis</keyword>
<keyword id="KW-0067">ATP-binding</keyword>
<keyword id="KW-0997">Cell inner membrane</keyword>
<keyword id="KW-1003">Cell membrane</keyword>
<keyword id="KW-0139">CF(1)</keyword>
<keyword id="KW-0375">Hydrogen ion transport</keyword>
<keyword id="KW-0406">Ion transport</keyword>
<keyword id="KW-0472">Membrane</keyword>
<keyword id="KW-0547">Nucleotide-binding</keyword>
<keyword id="KW-1185">Reference proteome</keyword>
<keyword id="KW-1278">Translocase</keyword>
<keyword id="KW-0813">Transport</keyword>
<reference key="1">
    <citation type="journal article" date="2005" name="Science">
        <title>Life at depth: Photobacterium profundum genome sequence and expression analysis.</title>
        <authorList>
            <person name="Vezzi A."/>
            <person name="Campanaro S."/>
            <person name="D'Angelo M."/>
            <person name="Simonato F."/>
            <person name="Vitulo N."/>
            <person name="Lauro F.M."/>
            <person name="Cestaro A."/>
            <person name="Malacrida G."/>
            <person name="Simionati B."/>
            <person name="Cannata N."/>
            <person name="Romualdi C."/>
            <person name="Bartlett D.H."/>
            <person name="Valle G."/>
        </authorList>
    </citation>
    <scope>NUCLEOTIDE SEQUENCE [LARGE SCALE GENOMIC DNA]</scope>
    <source>
        <strain>ATCC BAA-1253 / SS9</strain>
    </source>
</reference>
<accession>Q6LKZ6</accession>
<protein>
    <recommendedName>
        <fullName evidence="1">ATP synthase subunit beta 2</fullName>
        <ecNumber evidence="1">7.1.2.2</ecNumber>
    </recommendedName>
    <alternativeName>
        <fullName evidence="1">ATP synthase F1 sector subunit beta 2</fullName>
    </alternativeName>
    <alternativeName>
        <fullName evidence="1">F-ATPase subunit beta 2</fullName>
    </alternativeName>
</protein>
<name>ATPB2_PHOPR</name>
<evidence type="ECO:0000255" key="1">
    <source>
        <dbReference type="HAMAP-Rule" id="MF_01347"/>
    </source>
</evidence>
<proteinExistence type="inferred from homology"/>